<organism>
    <name type="scientific">Actinobacillus pleuropneumoniae serotype 3 (strain JL03)</name>
    <dbReference type="NCBI Taxonomy" id="434271"/>
    <lineage>
        <taxon>Bacteria</taxon>
        <taxon>Pseudomonadati</taxon>
        <taxon>Pseudomonadota</taxon>
        <taxon>Gammaproteobacteria</taxon>
        <taxon>Pasteurellales</taxon>
        <taxon>Pasteurellaceae</taxon>
        <taxon>Actinobacillus</taxon>
    </lineage>
</organism>
<sequence length="227" mass="25905">MELVFIRHGFSEWNAKNLFTGWRDVNLTERGIEEAKSAGQKLKAAGYEFDIAFTSVLTRAIKTCNIVLEESNQLWIPQVKNWRLNERHYGALQGLDKKATAEQYGDEQVHIWRRSYDISPPDLDAADPNSAHNDRRYAHLPKDVIPNAENLKITLERVLPFWEDQIAPALLSGKRVLVTAHGNSLRALAKHIIGISDAEIMDFEIPTGQPLVLKLDDKLNFVEKFYL</sequence>
<evidence type="ECO:0000255" key="1">
    <source>
        <dbReference type="HAMAP-Rule" id="MF_01039"/>
    </source>
</evidence>
<reference key="1">
    <citation type="journal article" date="2008" name="PLoS ONE">
        <title>Genome biology of Actinobacillus pleuropneumoniae JL03, an isolate of serotype 3 prevalent in China.</title>
        <authorList>
            <person name="Xu Z."/>
            <person name="Zhou Y."/>
            <person name="Li L."/>
            <person name="Zhou R."/>
            <person name="Xiao S."/>
            <person name="Wan Y."/>
            <person name="Zhang S."/>
            <person name="Wang K."/>
            <person name="Li W."/>
            <person name="Li L."/>
            <person name="Jin H."/>
            <person name="Kang M."/>
            <person name="Dalai B."/>
            <person name="Li T."/>
            <person name="Liu L."/>
            <person name="Cheng Y."/>
            <person name="Zhang L."/>
            <person name="Xu T."/>
            <person name="Zheng H."/>
            <person name="Pu S."/>
            <person name="Wang B."/>
            <person name="Gu W."/>
            <person name="Zhang X.L."/>
            <person name="Zhu G.-F."/>
            <person name="Wang S."/>
            <person name="Zhao G.-P."/>
            <person name="Chen H."/>
        </authorList>
    </citation>
    <scope>NUCLEOTIDE SEQUENCE [LARGE SCALE GENOMIC DNA]</scope>
    <source>
        <strain>JL03</strain>
    </source>
</reference>
<gene>
    <name evidence="1" type="primary">gpmA</name>
    <name type="ordered locus">APJL_0840</name>
</gene>
<protein>
    <recommendedName>
        <fullName evidence="1">2,3-bisphosphoglycerate-dependent phosphoglycerate mutase</fullName>
        <shortName evidence="1">BPG-dependent PGAM</shortName>
        <shortName evidence="1">PGAM</shortName>
        <shortName evidence="1">Phosphoglyceromutase</shortName>
        <shortName evidence="1">dPGM</shortName>
        <ecNumber evidence="1">5.4.2.11</ecNumber>
    </recommendedName>
</protein>
<keyword id="KW-0312">Gluconeogenesis</keyword>
<keyword id="KW-0324">Glycolysis</keyword>
<keyword id="KW-0413">Isomerase</keyword>
<comment type="function">
    <text evidence="1">Catalyzes the interconversion of 2-phosphoglycerate and 3-phosphoglycerate.</text>
</comment>
<comment type="catalytic activity">
    <reaction evidence="1">
        <text>(2R)-2-phosphoglycerate = (2R)-3-phosphoglycerate</text>
        <dbReference type="Rhea" id="RHEA:15901"/>
        <dbReference type="ChEBI" id="CHEBI:58272"/>
        <dbReference type="ChEBI" id="CHEBI:58289"/>
        <dbReference type="EC" id="5.4.2.11"/>
    </reaction>
</comment>
<comment type="pathway">
    <text evidence="1">Carbohydrate degradation; glycolysis; pyruvate from D-glyceraldehyde 3-phosphate: step 3/5.</text>
</comment>
<comment type="subunit">
    <text evidence="1">Homodimer.</text>
</comment>
<comment type="similarity">
    <text evidence="1">Belongs to the phosphoglycerate mutase family. BPG-dependent PGAM subfamily.</text>
</comment>
<accession>B0BPB3</accession>
<name>GPMA_ACTPJ</name>
<feature type="chain" id="PRO_1000135913" description="2,3-bisphosphoglycerate-dependent phosphoglycerate mutase">
    <location>
        <begin position="1"/>
        <end position="227"/>
    </location>
</feature>
<feature type="active site" description="Tele-phosphohistidine intermediate" evidence="1">
    <location>
        <position position="8"/>
    </location>
</feature>
<feature type="active site" description="Proton donor/acceptor" evidence="1">
    <location>
        <position position="86"/>
    </location>
</feature>
<feature type="binding site" evidence="1">
    <location>
        <begin position="7"/>
        <end position="14"/>
    </location>
    <ligand>
        <name>substrate</name>
    </ligand>
</feature>
<feature type="binding site" evidence="1">
    <location>
        <begin position="20"/>
        <end position="21"/>
    </location>
    <ligand>
        <name>substrate</name>
    </ligand>
</feature>
<feature type="binding site" evidence="1">
    <location>
        <position position="59"/>
    </location>
    <ligand>
        <name>substrate</name>
    </ligand>
</feature>
<feature type="binding site" evidence="1">
    <location>
        <begin position="86"/>
        <end position="89"/>
    </location>
    <ligand>
        <name>substrate</name>
    </ligand>
</feature>
<feature type="binding site" evidence="1">
    <location>
        <position position="97"/>
    </location>
    <ligand>
        <name>substrate</name>
    </ligand>
</feature>
<feature type="binding site" evidence="1">
    <location>
        <begin position="113"/>
        <end position="114"/>
    </location>
    <ligand>
        <name>substrate</name>
    </ligand>
</feature>
<feature type="binding site" evidence="1">
    <location>
        <begin position="182"/>
        <end position="183"/>
    </location>
    <ligand>
        <name>substrate</name>
    </ligand>
</feature>
<feature type="site" description="Transition state stabilizer" evidence="1">
    <location>
        <position position="181"/>
    </location>
</feature>
<proteinExistence type="inferred from homology"/>
<dbReference type="EC" id="5.4.2.11" evidence="1"/>
<dbReference type="EMBL" id="CP000687">
    <property type="protein sequence ID" value="ABY69398.1"/>
    <property type="molecule type" value="Genomic_DNA"/>
</dbReference>
<dbReference type="RefSeq" id="WP_005597307.1">
    <property type="nucleotide sequence ID" value="NC_010278.1"/>
</dbReference>
<dbReference type="SMR" id="B0BPB3"/>
<dbReference type="KEGG" id="apj:APJL_0840"/>
<dbReference type="HOGENOM" id="CLU_033323_1_5_6"/>
<dbReference type="UniPathway" id="UPA00109">
    <property type="reaction ID" value="UER00186"/>
</dbReference>
<dbReference type="Proteomes" id="UP000008547">
    <property type="component" value="Chromosome"/>
</dbReference>
<dbReference type="GO" id="GO:0004619">
    <property type="term" value="F:phosphoglycerate mutase activity"/>
    <property type="evidence" value="ECO:0007669"/>
    <property type="project" value="UniProtKB-EC"/>
</dbReference>
<dbReference type="GO" id="GO:0006094">
    <property type="term" value="P:gluconeogenesis"/>
    <property type="evidence" value="ECO:0007669"/>
    <property type="project" value="UniProtKB-UniRule"/>
</dbReference>
<dbReference type="GO" id="GO:0006096">
    <property type="term" value="P:glycolytic process"/>
    <property type="evidence" value="ECO:0007669"/>
    <property type="project" value="UniProtKB-UniRule"/>
</dbReference>
<dbReference type="CDD" id="cd07067">
    <property type="entry name" value="HP_PGM_like"/>
    <property type="match status" value="1"/>
</dbReference>
<dbReference type="FunFam" id="3.40.50.1240:FF:000003">
    <property type="entry name" value="2,3-bisphosphoglycerate-dependent phosphoglycerate mutase"/>
    <property type="match status" value="1"/>
</dbReference>
<dbReference type="Gene3D" id="3.40.50.1240">
    <property type="entry name" value="Phosphoglycerate mutase-like"/>
    <property type="match status" value="1"/>
</dbReference>
<dbReference type="HAMAP" id="MF_01039">
    <property type="entry name" value="PGAM_GpmA"/>
    <property type="match status" value="1"/>
</dbReference>
<dbReference type="InterPro" id="IPR013078">
    <property type="entry name" value="His_Pase_superF_clade-1"/>
</dbReference>
<dbReference type="InterPro" id="IPR029033">
    <property type="entry name" value="His_PPase_superfam"/>
</dbReference>
<dbReference type="InterPro" id="IPR005952">
    <property type="entry name" value="Phosphogly_mut1"/>
</dbReference>
<dbReference type="NCBIfam" id="TIGR01258">
    <property type="entry name" value="pgm_1"/>
    <property type="match status" value="1"/>
</dbReference>
<dbReference type="NCBIfam" id="NF010713">
    <property type="entry name" value="PRK14115.1"/>
    <property type="match status" value="1"/>
</dbReference>
<dbReference type="NCBIfam" id="NF010716">
    <property type="entry name" value="PRK14118.1"/>
    <property type="match status" value="1"/>
</dbReference>
<dbReference type="PANTHER" id="PTHR11931">
    <property type="entry name" value="PHOSPHOGLYCERATE MUTASE"/>
    <property type="match status" value="1"/>
</dbReference>
<dbReference type="Pfam" id="PF00300">
    <property type="entry name" value="His_Phos_1"/>
    <property type="match status" value="2"/>
</dbReference>
<dbReference type="PIRSF" id="PIRSF000709">
    <property type="entry name" value="6PFK_2-Ptase"/>
    <property type="match status" value="1"/>
</dbReference>
<dbReference type="SMART" id="SM00855">
    <property type="entry name" value="PGAM"/>
    <property type="match status" value="1"/>
</dbReference>
<dbReference type="SUPFAM" id="SSF53254">
    <property type="entry name" value="Phosphoglycerate mutase-like"/>
    <property type="match status" value="1"/>
</dbReference>